<protein>
    <recommendedName>
        <fullName>Nuclear hormone receptor family member nhr-86</fullName>
    </recommendedName>
</protein>
<accession>Q965W2</accession>
<accession>Q9GTD1</accession>
<dbReference type="EMBL" id="AF273828">
    <property type="protein sequence ID" value="AAG15177.1"/>
    <property type="status" value="ALT_INIT"/>
    <property type="molecule type" value="mRNA"/>
</dbReference>
<dbReference type="EMBL" id="FO081304">
    <property type="protein sequence ID" value="CCD70636.1"/>
    <property type="molecule type" value="Genomic_DNA"/>
</dbReference>
<dbReference type="RefSeq" id="NP_503561.2">
    <property type="nucleotide sequence ID" value="NM_071160.6"/>
</dbReference>
<dbReference type="SMR" id="Q965W2"/>
<dbReference type="BioGRID" id="43746">
    <property type="interactions" value="2"/>
</dbReference>
<dbReference type="FunCoup" id="Q965W2">
    <property type="interactions" value="403"/>
</dbReference>
<dbReference type="IntAct" id="Q965W2">
    <property type="interactions" value="1"/>
</dbReference>
<dbReference type="STRING" id="6239.Y40B10A.8a.2"/>
<dbReference type="PaxDb" id="6239-Y40B10A.8.2"/>
<dbReference type="EnsemblMetazoa" id="Y40B10A.8a.1">
    <property type="protein sequence ID" value="Y40B10A.8a.1"/>
    <property type="gene ID" value="WBGene00003676"/>
</dbReference>
<dbReference type="GeneID" id="178685"/>
<dbReference type="KEGG" id="cel:CELE_Y40B10A.8"/>
<dbReference type="UCSC" id="Y40B10A.8">
    <property type="organism name" value="c. elegans"/>
</dbReference>
<dbReference type="AGR" id="WB:WBGene00003676"/>
<dbReference type="CTD" id="178685"/>
<dbReference type="WormBase" id="Y40B10A.8a">
    <property type="protein sequence ID" value="CE31110"/>
    <property type="gene ID" value="WBGene00003676"/>
    <property type="gene designation" value="nhr-86"/>
</dbReference>
<dbReference type="eggNOG" id="KOG3575">
    <property type="taxonomic scope" value="Eukaryota"/>
</dbReference>
<dbReference type="GeneTree" id="ENSGT00940000168778"/>
<dbReference type="HOGENOM" id="CLU_007368_1_1_1"/>
<dbReference type="InParanoid" id="Q965W2"/>
<dbReference type="OMA" id="IHRKDGQ"/>
<dbReference type="OrthoDB" id="5830034at2759"/>
<dbReference type="PhylomeDB" id="Q965W2"/>
<dbReference type="PRO" id="PR:Q965W2"/>
<dbReference type="Proteomes" id="UP000001940">
    <property type="component" value="Chromosome V"/>
</dbReference>
<dbReference type="Bgee" id="WBGene00003676">
    <property type="expression patterns" value="Expressed in germ line (C elegans) and 4 other cell types or tissues"/>
</dbReference>
<dbReference type="ExpressionAtlas" id="Q965W2">
    <property type="expression patterns" value="baseline and differential"/>
</dbReference>
<dbReference type="GO" id="GO:0005634">
    <property type="term" value="C:nucleus"/>
    <property type="evidence" value="ECO:0000314"/>
    <property type="project" value="WormBase"/>
</dbReference>
<dbReference type="GO" id="GO:0003700">
    <property type="term" value="F:DNA-binding transcription factor activity"/>
    <property type="evidence" value="ECO:0000318"/>
    <property type="project" value="GO_Central"/>
</dbReference>
<dbReference type="GO" id="GO:0000978">
    <property type="term" value="F:RNA polymerase II cis-regulatory region sequence-specific DNA binding"/>
    <property type="evidence" value="ECO:0007669"/>
    <property type="project" value="InterPro"/>
</dbReference>
<dbReference type="GO" id="GO:0008270">
    <property type="term" value="F:zinc ion binding"/>
    <property type="evidence" value="ECO:0007669"/>
    <property type="project" value="UniProtKB-KW"/>
</dbReference>
<dbReference type="GO" id="GO:0006357">
    <property type="term" value="P:regulation of transcription by RNA polymerase II"/>
    <property type="evidence" value="ECO:0000318"/>
    <property type="project" value="GO_Central"/>
</dbReference>
<dbReference type="CDD" id="cd06960">
    <property type="entry name" value="NR_DBD_HNF4A"/>
    <property type="match status" value="1"/>
</dbReference>
<dbReference type="CDD" id="cd06157">
    <property type="entry name" value="NR_LBD"/>
    <property type="match status" value="1"/>
</dbReference>
<dbReference type="FunFam" id="3.30.50.10:FF:000073">
    <property type="entry name" value="Nuclear hormone receptor family member nhr-121"/>
    <property type="match status" value="1"/>
</dbReference>
<dbReference type="FunFam" id="1.10.565.10:FF:000068">
    <property type="entry name" value="Nuclear hormone receptor family member nhr-86"/>
    <property type="match status" value="1"/>
</dbReference>
<dbReference type="Gene3D" id="3.30.50.10">
    <property type="entry name" value="Erythroid Transcription Factor GATA-1, subunit A"/>
    <property type="match status" value="1"/>
</dbReference>
<dbReference type="Gene3D" id="1.10.565.10">
    <property type="entry name" value="Retinoid X Receptor"/>
    <property type="match status" value="1"/>
</dbReference>
<dbReference type="InterPro" id="IPR049636">
    <property type="entry name" value="HNF4-like_DBD"/>
</dbReference>
<dbReference type="InterPro" id="IPR035500">
    <property type="entry name" value="NHR-like_dom_sf"/>
</dbReference>
<dbReference type="InterPro" id="IPR000536">
    <property type="entry name" value="Nucl_hrmn_rcpt_lig-bd"/>
</dbReference>
<dbReference type="InterPro" id="IPR001628">
    <property type="entry name" value="Znf_hrmn_rcpt"/>
</dbReference>
<dbReference type="InterPro" id="IPR013088">
    <property type="entry name" value="Znf_NHR/GATA"/>
</dbReference>
<dbReference type="PANTHER" id="PTHR46011:SF31">
    <property type="entry name" value="NUCLEAR HORMONE RECEPTOR FAMILY MEMBER NHR-86"/>
    <property type="match status" value="1"/>
</dbReference>
<dbReference type="PANTHER" id="PTHR46011">
    <property type="entry name" value="NUCLEAR HORMONE RECEPTOR FAMILY MEMBER NHR-86-RELATED"/>
    <property type="match status" value="1"/>
</dbReference>
<dbReference type="Pfam" id="PF00104">
    <property type="entry name" value="Hormone_recep"/>
    <property type="match status" value="1"/>
</dbReference>
<dbReference type="Pfam" id="PF00105">
    <property type="entry name" value="zf-C4"/>
    <property type="match status" value="1"/>
</dbReference>
<dbReference type="PRINTS" id="PR00047">
    <property type="entry name" value="STROIDFINGER"/>
</dbReference>
<dbReference type="SMART" id="SM00430">
    <property type="entry name" value="HOLI"/>
    <property type="match status" value="1"/>
</dbReference>
<dbReference type="SMART" id="SM00399">
    <property type="entry name" value="ZnF_C4"/>
    <property type="match status" value="1"/>
</dbReference>
<dbReference type="SUPFAM" id="SSF57716">
    <property type="entry name" value="Glucocorticoid receptor-like (DNA-binding domain)"/>
    <property type="match status" value="1"/>
</dbReference>
<dbReference type="SUPFAM" id="SSF48508">
    <property type="entry name" value="Nuclear receptor ligand-binding domain"/>
    <property type="match status" value="1"/>
</dbReference>
<dbReference type="PROSITE" id="PS51843">
    <property type="entry name" value="NR_LBD"/>
    <property type="match status" value="1"/>
</dbReference>
<dbReference type="PROSITE" id="PS00031">
    <property type="entry name" value="NUCLEAR_REC_DBD_1"/>
    <property type="match status" value="1"/>
</dbReference>
<dbReference type="PROSITE" id="PS51030">
    <property type="entry name" value="NUCLEAR_REC_DBD_2"/>
    <property type="match status" value="1"/>
</dbReference>
<keyword id="KW-0010">Activator</keyword>
<keyword id="KW-0238">DNA-binding</keyword>
<keyword id="KW-0479">Metal-binding</keyword>
<keyword id="KW-0539">Nucleus</keyword>
<keyword id="KW-0675">Receptor</keyword>
<keyword id="KW-1185">Reference proteome</keyword>
<keyword id="KW-0804">Transcription</keyword>
<keyword id="KW-0805">Transcription regulation</keyword>
<keyword id="KW-0862">Zinc</keyword>
<keyword id="KW-0863">Zinc-finger</keyword>
<feature type="chain" id="PRO_0000053798" description="Nuclear hormone receptor family member nhr-86">
    <location>
        <begin position="1"/>
        <end position="407"/>
    </location>
</feature>
<feature type="domain" description="NR LBD" evidence="2">
    <location>
        <begin position="130"/>
        <end position="405"/>
    </location>
</feature>
<feature type="DNA-binding region" description="Nuclear receptor" evidence="1">
    <location>
        <begin position="21"/>
        <end position="96"/>
    </location>
</feature>
<feature type="zinc finger region" description="NR C4-type" evidence="1">
    <location>
        <begin position="24"/>
        <end position="44"/>
    </location>
</feature>
<feature type="zinc finger region" description="NR C4-type" evidence="1">
    <location>
        <begin position="60"/>
        <end position="79"/>
    </location>
</feature>
<feature type="region of interest" description="AF-2" evidence="2">
    <location>
        <begin position="394"/>
        <end position="405"/>
    </location>
</feature>
<feature type="mutagenesis site" description="Suppresses PCN-mediated induction of irg-4, irg-5, cyp-35C1 and ugt-13 in intestinal epithelial cells." evidence="5">
    <original>F</original>
    <variation>H</variation>
    <location>
        <position position="379"/>
    </location>
</feature>
<sequence length="407" mass="46838">MEPLDNTSLEESQFRPEKKEKSTCSICREDGDGYHFGAEACRACAAFFRRSVSLDKTYLCRGNNDCEITANIRCMCRSCRFAKCLEVGMNPAGVQQRRDTIGKREIKPDSTDLMQLLGSVGDGYPPTTSAQSALVEDLHPSFNDRMPILMKMRVNYRKMDNARLVIHRKDGQSLFKEKTPKAVNYKEACAQSIREVSLVADWVAWCFDDFVTLPMDQKKVLFRNFYTPFSVLEGAFLCHINDTSNALILPSGDYIDTNNLKSFFNIPDEEQPMTDDEIEKFCRMFKPSFELNRRGLVLPMMAEKIDVFEFFALCTFVFWDFGLDEQTDDCMMIGKSVKDRVMKELAFYLRCAKRLEEPSLRVASLLTLLPALQRCVRRFQEDIEITNVFNVYAPPKDFYDLVNGKFC</sequence>
<reference key="1">
    <citation type="journal article" date="2005" name="J. Mol. Evol.">
        <title>Explosive lineage-specific expansion of the orphan nuclear receptor HNF4 in nematodes.</title>
        <authorList>
            <person name="Robinson-Rechavi M."/>
            <person name="Maina C.V."/>
            <person name="Gissendanner C.R."/>
            <person name="Laudet V."/>
            <person name="Sluder A."/>
        </authorList>
    </citation>
    <scope>NUCLEOTIDE SEQUENCE [MRNA]</scope>
</reference>
<reference key="2">
    <citation type="journal article" date="1998" name="Science">
        <title>Genome sequence of the nematode C. elegans: a platform for investigating biology.</title>
        <authorList>
            <consortium name="The C. elegans sequencing consortium"/>
        </authorList>
    </citation>
    <scope>NUCLEOTIDE SEQUENCE [LARGE SCALE GENOMIC DNA]</scope>
    <source>
        <strain>Bristol N2</strain>
    </source>
</reference>
<reference evidence="6" key="3">
    <citation type="journal article" date="2010" name="Mol. Syst. Biol.">
        <title>Functional modularity of nuclear hormone receptors in a Caenorhabditis elegans metabolic gene regulatory network.</title>
        <authorList>
            <person name="Arda H.E."/>
            <person name="Taubert S."/>
            <person name="MacNeil L.T."/>
            <person name="Conine C.C."/>
            <person name="Tsuda B."/>
            <person name="Van Gilst M."/>
            <person name="Sequerra R."/>
            <person name="Doucette-Stamm L."/>
            <person name="Yamamoto K.R."/>
            <person name="Walhout A.J."/>
        </authorList>
    </citation>
    <scope>FUNCTION</scope>
    <scope>SUBCELLULAR LOCATION</scope>
    <scope>TISSUE SPECIFICITY</scope>
</reference>
<reference evidence="6" key="4">
    <citation type="journal article" date="2019" name="PLoS Genet.">
        <title>The nuclear hormone receptor NHR-86 controls anti-pathogen responses in C. elegans.</title>
        <authorList>
            <person name="Peterson N.D."/>
            <person name="Cheesman H.K."/>
            <person name="Liu P."/>
            <person name="Anderson S.M."/>
            <person name="Foster K.J."/>
            <person name="Chhaya R."/>
            <person name="Perrat P."/>
            <person name="Thekkiniath J."/>
            <person name="Yang Q."/>
            <person name="Haynes C.M."/>
            <person name="Pukkila-Worley R."/>
        </authorList>
    </citation>
    <scope>FUNCTION</scope>
    <scope>DISRUPTION PHENOTYPE</scope>
</reference>
<reference evidence="6" key="5">
    <citation type="journal article" date="2023" name="Immunity">
        <title>Non-canonical pattern recognition of a pathogen-derived metabolite by a nuclear hormone receptor identifies virulent bacteria in C. elegans.</title>
        <authorList>
            <person name="Peterson N.D."/>
            <person name="Tse S.Y."/>
            <person name="Huang Q.J."/>
            <person name="Wani K.A."/>
            <person name="Schiffer C.A."/>
            <person name="Pukkila-Worley R."/>
        </authorList>
    </citation>
    <scope>FUNCTION</scope>
    <scope>TISSUE SPECIFICITY</scope>
    <scope>DISRUPTION PHENOTYPE</scope>
    <scope>MUTAGENESIS OF PHE-379</scope>
    <scope>DOMAIN</scope>
</reference>
<organism>
    <name type="scientific">Caenorhabditis elegans</name>
    <dbReference type="NCBI Taxonomy" id="6239"/>
    <lineage>
        <taxon>Eukaryota</taxon>
        <taxon>Metazoa</taxon>
        <taxon>Ecdysozoa</taxon>
        <taxon>Nematoda</taxon>
        <taxon>Chromadorea</taxon>
        <taxon>Rhabditida</taxon>
        <taxon>Rhabditina</taxon>
        <taxon>Rhabditomorpha</taxon>
        <taxon>Rhabditoidea</taxon>
        <taxon>Rhabditidae</taxon>
        <taxon>Peloderinae</taxon>
        <taxon>Caenorhabditis</taxon>
    </lineage>
</organism>
<comment type="function">
    <text evidence="3 4 5">Nuclear receptor which acts as a transcription activator (PubMed:30668573, PubMed:36804958). Binds small molecule ligands, such as phenazine 1-carboxamide (PCN), a pathogen-derived metabolite, leading to modulation of innate immune responses against virulent pathogens (PubMed:30668573, PubMed:36804958). On exposure to exogenous PCN, P.aeruginosa and other xenobiotic immunostimulant such as R24, activates immune response genes, including irg-4, irg-5, mul-1, drd-50, cyp-35C1 and ugt-30, probably via direct interaction with their promoters, and independent of the p38 MAPK pmk-1 pathway (PubMed:30668573, PubMed:36804958). Exhibits higher affinity to R24 than PCN and thus induces stronger immune response (PubMed:36804958). Binds its own promoter thereby autoregulating its expression in the head hypodermis and the pharynx (PubMed:20461074). Possibly plays a role in lipid storage or catabolism (PubMed:20461074).</text>
</comment>
<comment type="subcellular location">
    <subcellularLocation>
        <location evidence="3">Nucleus</location>
    </subcellularLocation>
</comment>
<comment type="tissue specificity">
    <text evidence="3 5">Expressed in intestinal epithelial cells, excretory gland cells and in several head neurons.</text>
</comment>
<comment type="domain">
    <text evidence="5">Ligand-binding domain exhibits affinity for phenazine 1-carboxamide (PCN) and xenobiotic immunostimulant R24.</text>
</comment>
<comment type="disruption phenotype">
    <text evidence="4 5">Abolishes R24-induced expression of irg-4, irg-5 and irg-6 immune response genes (PubMed:30668573). Abolishes PCN- and P.aeruginosa-induced expression of irg-4 and cyp-35C1 (PubMed:36804958). RNAi-mediated knockdown reduces lifespan of animals fed P.aeruginosa, but not E.coli OP50 (PubMed:30668573). Suppresses the induction of hsp-4 and the accumulation of active xbp-1 following exposure to R24 (PubMed:30668573). Abolishes PCN-mediated protection from P.aeruginosa killing (PubMed:36804958). RNAi-mediated knockdown abolishes PCN- and P.aeruginosa-induced expression of irg-4 and cyp-35C1 (PubMed:36804958).</text>
</comment>
<comment type="similarity">
    <text evidence="6">Belongs to the nuclear hormone receptor family.</text>
</comment>
<comment type="sequence caution" evidence="6">
    <conflict type="erroneous initiation">
        <sequence resource="EMBL-CDS" id="AAG15177"/>
    </conflict>
    <text>Extended N-terminus.</text>
</comment>
<name>NHR86_CAEEL</name>
<evidence type="ECO:0000255" key="1">
    <source>
        <dbReference type="PROSITE-ProRule" id="PRU00407"/>
    </source>
</evidence>
<evidence type="ECO:0000255" key="2">
    <source>
        <dbReference type="PROSITE-ProRule" id="PRU01189"/>
    </source>
</evidence>
<evidence type="ECO:0000269" key="3">
    <source>
    </source>
</evidence>
<evidence type="ECO:0000269" key="4">
    <source>
    </source>
</evidence>
<evidence type="ECO:0000269" key="5">
    <source>
    </source>
</evidence>
<evidence type="ECO:0000305" key="6"/>
<gene>
    <name type="primary">nhr-86</name>
    <name type="ORF">Y40B10A.8</name>
</gene>
<proteinExistence type="evidence at protein level"/>